<gene>
    <name evidence="2" type="primary">trmB</name>
    <name type="ordered locus">NGO_0575</name>
</gene>
<organism>
    <name type="scientific">Neisseria gonorrhoeae (strain ATCC 700825 / FA 1090)</name>
    <dbReference type="NCBI Taxonomy" id="242231"/>
    <lineage>
        <taxon>Bacteria</taxon>
        <taxon>Pseudomonadati</taxon>
        <taxon>Pseudomonadota</taxon>
        <taxon>Betaproteobacteria</taxon>
        <taxon>Neisseriales</taxon>
        <taxon>Neisseriaceae</taxon>
        <taxon>Neisseria</taxon>
    </lineage>
</organism>
<keyword id="KW-0489">Methyltransferase</keyword>
<keyword id="KW-1185">Reference proteome</keyword>
<keyword id="KW-0949">S-adenosyl-L-methionine</keyword>
<keyword id="KW-0808">Transferase</keyword>
<keyword id="KW-0819">tRNA processing</keyword>
<sequence length="238" mass="26962">MTDTPENQTPNDLPAGHSRSIRSFVLRQSHMTAAQQRAIDTLWDSFGIDYQATPADLDARFGSSRPKILEIGFGMGMASAEIARRLPETDFLAIDVHGPGVGNLLKLINENHLENIRVMRHDAVEVVENMLQDGSLDGIHIFFPDPWHKKRHHKRRLIQAPFIAKLLPKLKTGGYIHLATDWEEYAQQMLEVLSSFDNLQNTAADYAPTPDYRPETKFEARGKRLGHGVWDLVFKRIG</sequence>
<name>TRMB_NEIG1</name>
<reference key="1">
    <citation type="submission" date="2003-03" db="EMBL/GenBank/DDBJ databases">
        <title>The complete genome sequence of Neisseria gonorrhoeae.</title>
        <authorList>
            <person name="Lewis L.A."/>
            <person name="Gillaspy A.F."/>
            <person name="McLaughlin R.E."/>
            <person name="Gipson M."/>
            <person name="Ducey T.F."/>
            <person name="Ownbey T."/>
            <person name="Hartman K."/>
            <person name="Nydick C."/>
            <person name="Carson M.B."/>
            <person name="Vaughn J."/>
            <person name="Thomson C."/>
            <person name="Song L."/>
            <person name="Lin S."/>
            <person name="Yuan X."/>
            <person name="Najar F."/>
            <person name="Zhan M."/>
            <person name="Ren Q."/>
            <person name="Zhu H."/>
            <person name="Qi S."/>
            <person name="Kenton S.M."/>
            <person name="Lai H."/>
            <person name="White J.D."/>
            <person name="Clifton S."/>
            <person name="Roe B.A."/>
            <person name="Dyer D.W."/>
        </authorList>
    </citation>
    <scope>NUCLEOTIDE SEQUENCE [LARGE SCALE GENOMIC DNA]</scope>
    <source>
        <strain>ATCC 700825 / FA 1090</strain>
    </source>
</reference>
<feature type="chain" id="PRO_0000229177" description="tRNA (guanine-N(7)-)-methyltransferase">
    <location>
        <begin position="1"/>
        <end position="238"/>
    </location>
</feature>
<feature type="active site" evidence="1">
    <location>
        <position position="145"/>
    </location>
</feature>
<feature type="binding site" evidence="2">
    <location>
        <position position="70"/>
    </location>
    <ligand>
        <name>S-adenosyl-L-methionine</name>
        <dbReference type="ChEBI" id="CHEBI:59789"/>
    </ligand>
</feature>
<feature type="binding site" evidence="2">
    <location>
        <position position="95"/>
    </location>
    <ligand>
        <name>S-adenosyl-L-methionine</name>
        <dbReference type="ChEBI" id="CHEBI:59789"/>
    </ligand>
</feature>
<feature type="binding site" evidence="2">
    <location>
        <position position="122"/>
    </location>
    <ligand>
        <name>S-adenosyl-L-methionine</name>
        <dbReference type="ChEBI" id="CHEBI:59789"/>
    </ligand>
</feature>
<feature type="binding site" evidence="2">
    <location>
        <position position="145"/>
    </location>
    <ligand>
        <name>S-adenosyl-L-methionine</name>
        <dbReference type="ChEBI" id="CHEBI:59789"/>
    </ligand>
</feature>
<feature type="binding site" evidence="2">
    <location>
        <position position="149"/>
    </location>
    <ligand>
        <name>substrate</name>
    </ligand>
</feature>
<feature type="binding site" evidence="2">
    <location>
        <position position="181"/>
    </location>
    <ligand>
        <name>substrate</name>
    </ligand>
</feature>
<feature type="binding site" evidence="2">
    <location>
        <begin position="216"/>
        <end position="219"/>
    </location>
    <ligand>
        <name>substrate</name>
    </ligand>
</feature>
<proteinExistence type="inferred from homology"/>
<dbReference type="EC" id="2.1.1.33" evidence="2"/>
<dbReference type="EMBL" id="AE004969">
    <property type="protein sequence ID" value="AAW89308.1"/>
    <property type="molecule type" value="Genomic_DNA"/>
</dbReference>
<dbReference type="RefSeq" id="WP_003688973.1">
    <property type="nucleotide sequence ID" value="NC_002946.2"/>
</dbReference>
<dbReference type="RefSeq" id="YP_207720.1">
    <property type="nucleotide sequence ID" value="NC_002946.2"/>
</dbReference>
<dbReference type="SMR" id="Q5F929"/>
<dbReference type="STRING" id="242231.NGO_0575"/>
<dbReference type="KEGG" id="ngo:NGO_0575"/>
<dbReference type="PATRIC" id="fig|242231.10.peg.681"/>
<dbReference type="HOGENOM" id="CLU_050910_0_1_4"/>
<dbReference type="UniPathway" id="UPA00989"/>
<dbReference type="Proteomes" id="UP000000535">
    <property type="component" value="Chromosome"/>
</dbReference>
<dbReference type="GO" id="GO:0043527">
    <property type="term" value="C:tRNA methyltransferase complex"/>
    <property type="evidence" value="ECO:0007669"/>
    <property type="project" value="TreeGrafter"/>
</dbReference>
<dbReference type="GO" id="GO:0008176">
    <property type="term" value="F:tRNA (guanine(46)-N7)-methyltransferase activity"/>
    <property type="evidence" value="ECO:0007669"/>
    <property type="project" value="UniProtKB-UniRule"/>
</dbReference>
<dbReference type="CDD" id="cd02440">
    <property type="entry name" value="AdoMet_MTases"/>
    <property type="match status" value="1"/>
</dbReference>
<dbReference type="FunFam" id="3.40.50.150:FF:000035">
    <property type="entry name" value="tRNA (guanine-N(7)-)-methyltransferase"/>
    <property type="match status" value="1"/>
</dbReference>
<dbReference type="Gene3D" id="3.40.50.150">
    <property type="entry name" value="Vaccinia Virus protein VP39"/>
    <property type="match status" value="1"/>
</dbReference>
<dbReference type="HAMAP" id="MF_01057">
    <property type="entry name" value="tRNA_methyltr_TrmB"/>
    <property type="match status" value="1"/>
</dbReference>
<dbReference type="InterPro" id="IPR029063">
    <property type="entry name" value="SAM-dependent_MTases_sf"/>
</dbReference>
<dbReference type="InterPro" id="IPR003358">
    <property type="entry name" value="tRNA_(Gua-N-7)_MeTrfase_Trmb"/>
</dbReference>
<dbReference type="InterPro" id="IPR055361">
    <property type="entry name" value="tRNA_methyltr_TrmB_bact"/>
</dbReference>
<dbReference type="NCBIfam" id="TIGR00091">
    <property type="entry name" value="tRNA (guanosine(46)-N7)-methyltransferase TrmB"/>
    <property type="match status" value="1"/>
</dbReference>
<dbReference type="PANTHER" id="PTHR23417">
    <property type="entry name" value="3-DEOXY-D-MANNO-OCTULOSONIC-ACID TRANSFERASE/TRNA GUANINE-N 7 - -METHYLTRANSFERASE"/>
    <property type="match status" value="1"/>
</dbReference>
<dbReference type="PANTHER" id="PTHR23417:SF14">
    <property type="entry name" value="PENTACOTRIPEPTIDE-REPEAT REGION OF PRORP DOMAIN-CONTAINING PROTEIN"/>
    <property type="match status" value="1"/>
</dbReference>
<dbReference type="Pfam" id="PF02390">
    <property type="entry name" value="Methyltransf_4"/>
    <property type="match status" value="1"/>
</dbReference>
<dbReference type="SUPFAM" id="SSF53335">
    <property type="entry name" value="S-adenosyl-L-methionine-dependent methyltransferases"/>
    <property type="match status" value="1"/>
</dbReference>
<dbReference type="PROSITE" id="PS51625">
    <property type="entry name" value="SAM_MT_TRMB"/>
    <property type="match status" value="1"/>
</dbReference>
<comment type="function">
    <text evidence="2">Catalyzes the formation of N(7)-methylguanine at position 46 (m7G46) in tRNA.</text>
</comment>
<comment type="catalytic activity">
    <reaction evidence="2">
        <text>guanosine(46) in tRNA + S-adenosyl-L-methionine = N(7)-methylguanosine(46) in tRNA + S-adenosyl-L-homocysteine</text>
        <dbReference type="Rhea" id="RHEA:42708"/>
        <dbReference type="Rhea" id="RHEA-COMP:10188"/>
        <dbReference type="Rhea" id="RHEA-COMP:10189"/>
        <dbReference type="ChEBI" id="CHEBI:57856"/>
        <dbReference type="ChEBI" id="CHEBI:59789"/>
        <dbReference type="ChEBI" id="CHEBI:74269"/>
        <dbReference type="ChEBI" id="CHEBI:74480"/>
        <dbReference type="EC" id="2.1.1.33"/>
    </reaction>
</comment>
<comment type="pathway">
    <text evidence="2">tRNA modification; N(7)-methylguanine-tRNA biosynthesis.</text>
</comment>
<comment type="similarity">
    <text evidence="2">Belongs to the class I-like SAM-binding methyltransferase superfamily. TrmB family.</text>
</comment>
<protein>
    <recommendedName>
        <fullName evidence="2">tRNA (guanine-N(7)-)-methyltransferase</fullName>
        <ecNumber evidence="2">2.1.1.33</ecNumber>
    </recommendedName>
    <alternativeName>
        <fullName evidence="2">tRNA (guanine(46)-N(7))-methyltransferase</fullName>
    </alternativeName>
    <alternativeName>
        <fullName evidence="2">tRNA(m7G46)-methyltransferase</fullName>
    </alternativeName>
</protein>
<evidence type="ECO:0000250" key="1"/>
<evidence type="ECO:0000255" key="2">
    <source>
        <dbReference type="HAMAP-Rule" id="MF_01057"/>
    </source>
</evidence>
<accession>Q5F929</accession>